<protein>
    <recommendedName>
        <fullName>Cytochrome b</fullName>
    </recommendedName>
    <alternativeName>
        <fullName>Complex III subunit 3</fullName>
    </alternativeName>
    <alternativeName>
        <fullName>Complex III subunit III</fullName>
    </alternativeName>
    <alternativeName>
        <fullName>Cytochrome b-c1 complex subunit 3</fullName>
    </alternativeName>
    <alternativeName>
        <fullName>Ubiquinol-cytochrome-c reductase complex cytochrome b subunit</fullName>
    </alternativeName>
</protein>
<comment type="function">
    <text evidence="2">Component of the ubiquinol-cytochrome c reductase complex (complex III or cytochrome b-c1 complex) that is part of the mitochondrial respiratory chain. The b-c1 complex mediates electron transfer from ubiquinol to cytochrome c. Contributes to the generation of a proton gradient across the mitochondrial membrane that is then used for ATP synthesis.</text>
</comment>
<comment type="cofactor">
    <cofactor evidence="2">
        <name>heme b</name>
        <dbReference type="ChEBI" id="CHEBI:60344"/>
    </cofactor>
    <text evidence="2">Binds 2 heme b groups non-covalently.</text>
</comment>
<comment type="subunit">
    <text evidence="2">The cytochrome bc1 complex contains 3 respiratory subunits (MT-CYB, CYC1 and UQCRFS1), 2 core proteins (UQCRC1 and UQCRC2) and probably 6 low-molecular weight proteins.</text>
</comment>
<comment type="subcellular location">
    <subcellularLocation>
        <location evidence="2">Mitochondrion inner membrane</location>
        <topology evidence="2">Multi-pass membrane protein</topology>
    </subcellularLocation>
</comment>
<comment type="miscellaneous">
    <text evidence="1">Heme 1 (or BL or b562) is low-potential and absorbs at about 562 nm, and heme 2 (or BH or b566) is high-potential and absorbs at about 566 nm.</text>
</comment>
<comment type="similarity">
    <text evidence="3 4">Belongs to the cytochrome b family.</text>
</comment>
<comment type="caution">
    <text evidence="2">The full-length protein contains only eight transmembrane helices, not nine as predicted by bioinformatics tools.</text>
</comment>
<geneLocation type="mitochondrion"/>
<feature type="chain" id="PRO_0000061726" description="Cytochrome b">
    <location>
        <begin position="1"/>
        <end position="380"/>
    </location>
</feature>
<feature type="transmembrane region" description="Helical" evidence="2">
    <location>
        <begin position="34"/>
        <end position="54"/>
    </location>
</feature>
<feature type="transmembrane region" description="Helical" evidence="2">
    <location>
        <begin position="78"/>
        <end position="99"/>
    </location>
</feature>
<feature type="transmembrane region" description="Helical" evidence="2">
    <location>
        <begin position="114"/>
        <end position="134"/>
    </location>
</feature>
<feature type="transmembrane region" description="Helical" evidence="2">
    <location>
        <begin position="179"/>
        <end position="199"/>
    </location>
</feature>
<feature type="transmembrane region" description="Helical" evidence="2">
    <location>
        <begin position="227"/>
        <end position="247"/>
    </location>
</feature>
<feature type="transmembrane region" description="Helical" evidence="2">
    <location>
        <begin position="289"/>
        <end position="309"/>
    </location>
</feature>
<feature type="transmembrane region" description="Helical" evidence="2">
    <location>
        <begin position="321"/>
        <end position="341"/>
    </location>
</feature>
<feature type="transmembrane region" description="Helical" evidence="2">
    <location>
        <begin position="348"/>
        <end position="368"/>
    </location>
</feature>
<feature type="binding site" description="axial binding residue" evidence="2">
    <location>
        <position position="84"/>
    </location>
    <ligand>
        <name>heme b</name>
        <dbReference type="ChEBI" id="CHEBI:60344"/>
        <label>b562</label>
    </ligand>
    <ligandPart>
        <name>Fe</name>
        <dbReference type="ChEBI" id="CHEBI:18248"/>
    </ligandPart>
</feature>
<feature type="binding site" description="axial binding residue" evidence="2">
    <location>
        <position position="98"/>
    </location>
    <ligand>
        <name>heme b</name>
        <dbReference type="ChEBI" id="CHEBI:60344"/>
        <label>b566</label>
    </ligand>
    <ligandPart>
        <name>Fe</name>
        <dbReference type="ChEBI" id="CHEBI:18248"/>
    </ligandPart>
</feature>
<feature type="binding site" description="axial binding residue" evidence="2">
    <location>
        <position position="183"/>
    </location>
    <ligand>
        <name>heme b</name>
        <dbReference type="ChEBI" id="CHEBI:60344"/>
        <label>b562</label>
    </ligand>
    <ligandPart>
        <name>Fe</name>
        <dbReference type="ChEBI" id="CHEBI:18248"/>
    </ligandPart>
</feature>
<feature type="binding site" description="axial binding residue" evidence="2">
    <location>
        <position position="197"/>
    </location>
    <ligand>
        <name>heme b</name>
        <dbReference type="ChEBI" id="CHEBI:60344"/>
        <label>b566</label>
    </ligand>
    <ligandPart>
        <name>Fe</name>
        <dbReference type="ChEBI" id="CHEBI:18248"/>
    </ligandPart>
</feature>
<feature type="binding site" evidence="2">
    <location>
        <position position="202"/>
    </location>
    <ligand>
        <name>a ubiquinone</name>
        <dbReference type="ChEBI" id="CHEBI:16389"/>
    </ligand>
</feature>
<feature type="sequence conflict" description="In Ref. 2; AAA66470." evidence="5" ref="2">
    <original>R</original>
    <variation>F</variation>
    <location>
        <position position="72"/>
    </location>
</feature>
<feature type="sequence conflict" description="In Ref. 2; AAA66470." evidence="5" ref="2">
    <original>W</original>
    <variation>L</variation>
    <location>
        <position position="78"/>
    </location>
</feature>
<feature type="sequence conflict" description="In Ref. 2; AAA66470." evidence="5" ref="2">
    <original>A</original>
    <variation>L</variation>
    <location>
        <position position="88"/>
    </location>
</feature>
<feature type="sequence conflict" description="In Ref. 2; AAA66470." evidence="5" ref="2">
    <original>I</original>
    <variation>K</variation>
    <location>
        <position position="154"/>
    </location>
</feature>
<feature type="sequence conflict" description="In Ref. 2; AAA66470." evidence="5" ref="2">
    <original>IW</original>
    <variation>SL</variation>
    <location>
        <begin position="165"/>
        <end position="166"/>
    </location>
</feature>
<feature type="sequence conflict" description="In Ref. 2; AAA66470." evidence="5" ref="2">
    <original>IP</original>
    <variation>M</variation>
    <location>
        <begin position="285"/>
        <end position="286"/>
    </location>
</feature>
<evidence type="ECO:0000250" key="1"/>
<evidence type="ECO:0000250" key="2">
    <source>
        <dbReference type="UniProtKB" id="P00157"/>
    </source>
</evidence>
<evidence type="ECO:0000255" key="3">
    <source>
        <dbReference type="PROSITE-ProRule" id="PRU00967"/>
    </source>
</evidence>
<evidence type="ECO:0000255" key="4">
    <source>
        <dbReference type="PROSITE-ProRule" id="PRU00968"/>
    </source>
</evidence>
<evidence type="ECO:0000305" key="5"/>
<dbReference type="EMBL" id="M10217">
    <property type="protein sequence ID" value="AAA66470.1"/>
    <property type="molecule type" value="Genomic_DNA"/>
</dbReference>
<dbReference type="EMBL" id="M10188">
    <property type="protein sequence ID" value="AAA65520.2"/>
    <property type="molecule type" value="Genomic_DNA"/>
</dbReference>
<dbReference type="PIR" id="A23955">
    <property type="entry name" value="CBXL"/>
</dbReference>
<dbReference type="RefSeq" id="NP_008146.1">
    <property type="nucleotide sequence ID" value="NC_001573.1"/>
</dbReference>
<dbReference type="SMR" id="P00160"/>
<dbReference type="GeneID" id="2642080"/>
<dbReference type="KEGG" id="xla:2642080"/>
<dbReference type="CTD" id="4519"/>
<dbReference type="OrthoDB" id="244at2759"/>
<dbReference type="Proteomes" id="UP000186698">
    <property type="component" value="Mitochondrion MT"/>
</dbReference>
<dbReference type="Bgee" id="2642080">
    <property type="expression patterns" value="Expressed in brain and 19 other cell types or tissues"/>
</dbReference>
<dbReference type="GO" id="GO:0016020">
    <property type="term" value="C:membrane"/>
    <property type="evidence" value="ECO:0000318"/>
    <property type="project" value="GO_Central"/>
</dbReference>
<dbReference type="GO" id="GO:0005743">
    <property type="term" value="C:mitochondrial inner membrane"/>
    <property type="evidence" value="ECO:0007669"/>
    <property type="project" value="UniProtKB-SubCell"/>
</dbReference>
<dbReference type="GO" id="GO:0045275">
    <property type="term" value="C:respiratory chain complex III"/>
    <property type="evidence" value="ECO:0000318"/>
    <property type="project" value="GO_Central"/>
</dbReference>
<dbReference type="GO" id="GO:0046872">
    <property type="term" value="F:metal ion binding"/>
    <property type="evidence" value="ECO:0007669"/>
    <property type="project" value="UniProtKB-KW"/>
</dbReference>
<dbReference type="GO" id="GO:0008121">
    <property type="term" value="F:ubiquinol-cytochrome-c reductase activity"/>
    <property type="evidence" value="ECO:0007669"/>
    <property type="project" value="InterPro"/>
</dbReference>
<dbReference type="GO" id="GO:0006122">
    <property type="term" value="P:mitochondrial electron transport, ubiquinol to cytochrome c"/>
    <property type="evidence" value="ECO:0000318"/>
    <property type="project" value="GO_Central"/>
</dbReference>
<dbReference type="CDD" id="cd00290">
    <property type="entry name" value="cytochrome_b_C"/>
    <property type="match status" value="1"/>
</dbReference>
<dbReference type="CDD" id="cd00284">
    <property type="entry name" value="Cytochrome_b_N"/>
    <property type="match status" value="1"/>
</dbReference>
<dbReference type="FunFam" id="1.20.810.10:FF:000002">
    <property type="entry name" value="Cytochrome b"/>
    <property type="match status" value="1"/>
</dbReference>
<dbReference type="Gene3D" id="1.20.810.10">
    <property type="entry name" value="Cytochrome Bc1 Complex, Chain C"/>
    <property type="match status" value="1"/>
</dbReference>
<dbReference type="InterPro" id="IPR005798">
    <property type="entry name" value="Cyt_b/b6_C"/>
</dbReference>
<dbReference type="InterPro" id="IPR036150">
    <property type="entry name" value="Cyt_b/b6_C_sf"/>
</dbReference>
<dbReference type="InterPro" id="IPR005797">
    <property type="entry name" value="Cyt_b/b6_N"/>
</dbReference>
<dbReference type="InterPro" id="IPR027387">
    <property type="entry name" value="Cytb/b6-like_sf"/>
</dbReference>
<dbReference type="InterPro" id="IPR030689">
    <property type="entry name" value="Cytochrome_b"/>
</dbReference>
<dbReference type="InterPro" id="IPR048260">
    <property type="entry name" value="Cytochrome_b_C_euk/bac"/>
</dbReference>
<dbReference type="InterPro" id="IPR048259">
    <property type="entry name" value="Cytochrome_b_N_euk/bac"/>
</dbReference>
<dbReference type="InterPro" id="IPR016174">
    <property type="entry name" value="Di-haem_cyt_TM"/>
</dbReference>
<dbReference type="PANTHER" id="PTHR19271">
    <property type="entry name" value="CYTOCHROME B"/>
    <property type="match status" value="1"/>
</dbReference>
<dbReference type="PANTHER" id="PTHR19271:SF16">
    <property type="entry name" value="CYTOCHROME B"/>
    <property type="match status" value="1"/>
</dbReference>
<dbReference type="Pfam" id="PF00032">
    <property type="entry name" value="Cytochrom_B_C"/>
    <property type="match status" value="1"/>
</dbReference>
<dbReference type="Pfam" id="PF00033">
    <property type="entry name" value="Cytochrome_B"/>
    <property type="match status" value="1"/>
</dbReference>
<dbReference type="PIRSF" id="PIRSF038885">
    <property type="entry name" value="COB"/>
    <property type="match status" value="1"/>
</dbReference>
<dbReference type="SUPFAM" id="SSF81648">
    <property type="entry name" value="a domain/subunit of cytochrome bc1 complex (Ubiquinol-cytochrome c reductase)"/>
    <property type="match status" value="1"/>
</dbReference>
<dbReference type="SUPFAM" id="SSF81342">
    <property type="entry name" value="Transmembrane di-heme cytochromes"/>
    <property type="match status" value="1"/>
</dbReference>
<dbReference type="PROSITE" id="PS51003">
    <property type="entry name" value="CYTB_CTER"/>
    <property type="match status" value="1"/>
</dbReference>
<dbReference type="PROSITE" id="PS51002">
    <property type="entry name" value="CYTB_NTER"/>
    <property type="match status" value="1"/>
</dbReference>
<sequence length="380" mass="42715">MAPNIRKSHPLIKIINNSFIDLPTPSNISSLWNFGSLLGVCLIAQIITGLFLAMHYTADTSMAFSSVAHICRDVNYGWLIRNLHANGASFFFICIYLHIGRGLYYGSFLYKETWNIGVILLFLVMATAFVGYVLPWGQMSFWGATVITNLLSAIPYIGNVLVQWIWGGFSVDNATLTRFFAFHFLLPFIIAGASILHLLFLHETGSTNPTGLNSDPDKVPFHPYFSYKDLLGFLIMLTALTLLAMFSPNLLGDPDNFTPANPLITPPHIKPEWYFLFAYAILRSIPNKLGGVLALVLSILILALMPLLHTSKQRSLMFRPFTQIMFWALVADTLILTWIGGQPVEDPYTMIGQLASVIYFSIFIIMFPLMGWVENKLLNW</sequence>
<keyword id="KW-0249">Electron transport</keyword>
<keyword id="KW-0349">Heme</keyword>
<keyword id="KW-0408">Iron</keyword>
<keyword id="KW-0472">Membrane</keyword>
<keyword id="KW-0479">Metal-binding</keyword>
<keyword id="KW-0496">Mitochondrion</keyword>
<keyword id="KW-0999">Mitochondrion inner membrane</keyword>
<keyword id="KW-1185">Reference proteome</keyword>
<keyword id="KW-0679">Respiratory chain</keyword>
<keyword id="KW-0812">Transmembrane</keyword>
<keyword id="KW-1133">Transmembrane helix</keyword>
<keyword id="KW-0813">Transport</keyword>
<keyword id="KW-0830">Ubiquinone</keyword>
<reference key="1">
    <citation type="journal article" date="1985" name="Gene">
        <title>Nucleotide sequence of a Xenopus laevis mitochondrial DNA fragment containing the D-loop, flanking tRNA genes and the apocytochrome b gene.</title>
        <authorList>
            <person name="Dunon-Bluteau D."/>
            <person name="Volovitch M."/>
            <person name="Brun G."/>
        </authorList>
    </citation>
    <scope>NUCLEOTIDE SEQUENCE [GENOMIC DNA]</scope>
</reference>
<reference key="2">
    <citation type="journal article" date="1985" name="J. Biol. Chem.">
        <title>The complete nucleotide sequence of the Xenopus laevis mitochondrial genome.</title>
        <authorList>
            <person name="Roe B.A."/>
            <person name="Ma D.-P."/>
            <person name="Wilson R.K."/>
            <person name="Wong J.F.-H."/>
        </authorList>
    </citation>
    <scope>NUCLEOTIDE SEQUENCE [GENOMIC DNA]</scope>
</reference>
<organism>
    <name type="scientific">Xenopus laevis</name>
    <name type="common">African clawed frog</name>
    <dbReference type="NCBI Taxonomy" id="8355"/>
    <lineage>
        <taxon>Eukaryota</taxon>
        <taxon>Metazoa</taxon>
        <taxon>Chordata</taxon>
        <taxon>Craniata</taxon>
        <taxon>Vertebrata</taxon>
        <taxon>Euteleostomi</taxon>
        <taxon>Amphibia</taxon>
        <taxon>Batrachia</taxon>
        <taxon>Anura</taxon>
        <taxon>Pipoidea</taxon>
        <taxon>Pipidae</taxon>
        <taxon>Xenopodinae</taxon>
        <taxon>Xenopus</taxon>
        <taxon>Xenopus</taxon>
    </lineage>
</organism>
<proteinExistence type="inferred from homology"/>
<gene>
    <name type="primary">mt-cyb</name>
    <name type="synonym">cob</name>
    <name type="synonym">cytb</name>
    <name type="synonym">mtcyb</name>
</gene>
<name>CYB_XENLA</name>
<accession>P00160</accession>